<organism>
    <name type="scientific">Pseudomonas fluorescens</name>
    <dbReference type="NCBI Taxonomy" id="294"/>
    <lineage>
        <taxon>Bacteria</taxon>
        <taxon>Pseudomonadati</taxon>
        <taxon>Pseudomonadota</taxon>
        <taxon>Gammaproteobacteria</taxon>
        <taxon>Pseudomonadales</taxon>
        <taxon>Pseudomonadaceae</taxon>
        <taxon>Pseudomonas</taxon>
    </lineage>
</organism>
<dbReference type="EC" id="3.4.23.36" evidence="1"/>
<dbReference type="EMBL" id="M35366">
    <property type="protein sequence ID" value="AAA25884.1"/>
    <property type="molecule type" value="Genomic_DNA"/>
</dbReference>
<dbReference type="PIR" id="B37152">
    <property type="entry name" value="B37152"/>
</dbReference>
<dbReference type="RefSeq" id="WP_032877979.1">
    <property type="nucleotide sequence ID" value="NZ_SPKM01000015.1"/>
</dbReference>
<dbReference type="SMR" id="P17942"/>
<dbReference type="eggNOG" id="COG0597">
    <property type="taxonomic scope" value="Bacteria"/>
</dbReference>
<dbReference type="UniPathway" id="UPA00665"/>
<dbReference type="GO" id="GO:0005886">
    <property type="term" value="C:plasma membrane"/>
    <property type="evidence" value="ECO:0007669"/>
    <property type="project" value="UniProtKB-SubCell"/>
</dbReference>
<dbReference type="GO" id="GO:0004190">
    <property type="term" value="F:aspartic-type endopeptidase activity"/>
    <property type="evidence" value="ECO:0007669"/>
    <property type="project" value="UniProtKB-UniRule"/>
</dbReference>
<dbReference type="GO" id="GO:0006508">
    <property type="term" value="P:proteolysis"/>
    <property type="evidence" value="ECO:0007669"/>
    <property type="project" value="UniProtKB-KW"/>
</dbReference>
<dbReference type="HAMAP" id="MF_00161">
    <property type="entry name" value="LspA"/>
    <property type="match status" value="1"/>
</dbReference>
<dbReference type="InterPro" id="IPR001872">
    <property type="entry name" value="Peptidase_A8"/>
</dbReference>
<dbReference type="NCBIfam" id="TIGR00077">
    <property type="entry name" value="lspA"/>
    <property type="match status" value="1"/>
</dbReference>
<dbReference type="PANTHER" id="PTHR33695">
    <property type="entry name" value="LIPOPROTEIN SIGNAL PEPTIDASE"/>
    <property type="match status" value="1"/>
</dbReference>
<dbReference type="PANTHER" id="PTHR33695:SF1">
    <property type="entry name" value="LIPOPROTEIN SIGNAL PEPTIDASE"/>
    <property type="match status" value="1"/>
</dbReference>
<dbReference type="Pfam" id="PF01252">
    <property type="entry name" value="Peptidase_A8"/>
    <property type="match status" value="1"/>
</dbReference>
<dbReference type="PRINTS" id="PR00781">
    <property type="entry name" value="LIPOSIGPTASE"/>
</dbReference>
<dbReference type="PROSITE" id="PS00855">
    <property type="entry name" value="SPASE_II"/>
    <property type="match status" value="1"/>
</dbReference>
<feature type="chain" id="PRO_0000178803" description="Lipoprotein signal peptidase">
    <location>
        <begin position="1"/>
        <end position="170"/>
    </location>
</feature>
<feature type="transmembrane region" description="Helical" evidence="1">
    <location>
        <begin position="11"/>
        <end position="31"/>
    </location>
</feature>
<feature type="transmembrane region" description="Helical" evidence="1">
    <location>
        <begin position="41"/>
        <end position="61"/>
    </location>
</feature>
<feature type="transmembrane region" description="Helical" evidence="1">
    <location>
        <begin position="69"/>
        <end position="89"/>
    </location>
</feature>
<feature type="transmembrane region" description="Helical" evidence="1">
    <location>
        <begin position="95"/>
        <end position="115"/>
    </location>
</feature>
<feature type="transmembrane region" description="Helical" evidence="1">
    <location>
        <begin position="136"/>
        <end position="156"/>
    </location>
</feature>
<feature type="active site" evidence="1">
    <location>
        <position position="125"/>
    </location>
</feature>
<feature type="active site" evidence="1">
    <location>
        <position position="144"/>
    </location>
</feature>
<gene>
    <name evidence="1" type="primary">lspA</name>
</gene>
<proteinExistence type="inferred from homology"/>
<evidence type="ECO:0000255" key="1">
    <source>
        <dbReference type="HAMAP-Rule" id="MF_00161"/>
    </source>
</evidence>
<evidence type="ECO:0000305" key="2"/>
<sequence length="170" mass="18876">MPNADSRFGRLGWLVLSLLVLVIDQVSKAHFEGSLEMFQQIVVIPDYFSWTLAYNTGAAFSFLADGGGWQRWLFAVIAVVVSAVLVVWLKRLGRDDTWLAIALALVLGGALGNLYDRIALGHVIDFILVHWQNRHYFPAFNFADSAITVGAIMLALDMFKSKKTGETVND</sequence>
<protein>
    <recommendedName>
        <fullName evidence="1">Lipoprotein signal peptidase</fullName>
        <ecNumber evidence="1">3.4.23.36</ecNumber>
    </recommendedName>
    <alternativeName>
        <fullName evidence="1">Prolipoprotein signal peptidase</fullName>
    </alternativeName>
    <alternativeName>
        <fullName evidence="1">Signal peptidase II</fullName>
        <shortName evidence="1">SPase II</shortName>
    </alternativeName>
</protein>
<reference key="1">
    <citation type="journal article" date="1990" name="J. Bacteriol.">
        <title>Nucleotide sequence of the Pseudomonas fluorescens signal peptidase II gene (lsp) and flanking genes.</title>
        <authorList>
            <person name="Isaki L."/>
            <person name="Beers R."/>
            <person name="Wu H.C."/>
        </authorList>
    </citation>
    <scope>NUCLEOTIDE SEQUENCE [GENOMIC DNA]</scope>
    <source>
        <strain>ATCC 49323 / NCIMB 10586</strain>
    </source>
</reference>
<name>LSPA_PSEFL</name>
<keyword id="KW-0064">Aspartyl protease</keyword>
<keyword id="KW-0997">Cell inner membrane</keyword>
<keyword id="KW-1003">Cell membrane</keyword>
<keyword id="KW-0378">Hydrolase</keyword>
<keyword id="KW-0472">Membrane</keyword>
<keyword id="KW-0645">Protease</keyword>
<keyword id="KW-0812">Transmembrane</keyword>
<keyword id="KW-1133">Transmembrane helix</keyword>
<comment type="function">
    <text evidence="1">This protein specifically catalyzes the removal of signal peptides from prolipoproteins.</text>
</comment>
<comment type="catalytic activity">
    <reaction evidence="1">
        <text>Release of signal peptides from bacterial membrane prolipoproteins. Hydrolyzes -Xaa-Yaa-Zaa-|-(S,diacylglyceryl)Cys-, in which Xaa is hydrophobic (preferably Leu), and Yaa (Ala or Ser) and Zaa (Gly or Ala) have small, neutral side chains.</text>
        <dbReference type="EC" id="3.4.23.36"/>
    </reaction>
</comment>
<comment type="pathway">
    <text evidence="1">Protein modification; lipoprotein biosynthesis (signal peptide cleavage).</text>
</comment>
<comment type="subcellular location">
    <subcellularLocation>
        <location evidence="1">Cell inner membrane</location>
        <topology evidence="1">Multi-pass membrane protein</topology>
    </subcellularLocation>
</comment>
<comment type="similarity">
    <text evidence="1 2">Belongs to the peptidase A8 family.</text>
</comment>
<accession>P17942</accession>